<reference key="1">
    <citation type="journal article" date="2008" name="J. Biotechnol.">
        <title>The genome of Xanthomonas campestris pv. campestris B100 and its use for the reconstruction of metabolic pathways involved in xanthan biosynthesis.</title>
        <authorList>
            <person name="Vorhoelter F.-J."/>
            <person name="Schneiker S."/>
            <person name="Goesmann A."/>
            <person name="Krause L."/>
            <person name="Bekel T."/>
            <person name="Kaiser O."/>
            <person name="Linke B."/>
            <person name="Patschkowski T."/>
            <person name="Rueckert C."/>
            <person name="Schmid J."/>
            <person name="Sidhu V.K."/>
            <person name="Sieber V."/>
            <person name="Tauch A."/>
            <person name="Watt S.A."/>
            <person name="Weisshaar B."/>
            <person name="Becker A."/>
            <person name="Niehaus K."/>
            <person name="Puehler A."/>
        </authorList>
    </citation>
    <scope>NUCLEOTIDE SEQUENCE [LARGE SCALE GENOMIC DNA]</scope>
    <source>
        <strain>B100</strain>
    </source>
</reference>
<feature type="chain" id="PRO_1000189905" description="Elongation factor Ts">
    <location>
        <begin position="1"/>
        <end position="292"/>
    </location>
</feature>
<feature type="region of interest" description="Involved in Mg(2+) ion dislocation from EF-Tu" evidence="1">
    <location>
        <begin position="79"/>
        <end position="82"/>
    </location>
</feature>
<proteinExistence type="inferred from homology"/>
<evidence type="ECO:0000255" key="1">
    <source>
        <dbReference type="HAMAP-Rule" id="MF_00050"/>
    </source>
</evidence>
<keyword id="KW-0963">Cytoplasm</keyword>
<keyword id="KW-0251">Elongation factor</keyword>
<keyword id="KW-0648">Protein biosynthesis</keyword>
<dbReference type="EMBL" id="AM920689">
    <property type="protein sequence ID" value="CAP52284.1"/>
    <property type="molecule type" value="Genomic_DNA"/>
</dbReference>
<dbReference type="SMR" id="B0RW66"/>
<dbReference type="KEGG" id="xca:xcc-b100_2923"/>
<dbReference type="HOGENOM" id="CLU_047155_0_0_6"/>
<dbReference type="Proteomes" id="UP000001188">
    <property type="component" value="Chromosome"/>
</dbReference>
<dbReference type="GO" id="GO:0005737">
    <property type="term" value="C:cytoplasm"/>
    <property type="evidence" value="ECO:0007669"/>
    <property type="project" value="UniProtKB-SubCell"/>
</dbReference>
<dbReference type="GO" id="GO:0003746">
    <property type="term" value="F:translation elongation factor activity"/>
    <property type="evidence" value="ECO:0007669"/>
    <property type="project" value="UniProtKB-UniRule"/>
</dbReference>
<dbReference type="CDD" id="cd14275">
    <property type="entry name" value="UBA_EF-Ts"/>
    <property type="match status" value="1"/>
</dbReference>
<dbReference type="FunFam" id="1.10.286.20:FF:000001">
    <property type="entry name" value="Elongation factor Ts"/>
    <property type="match status" value="1"/>
</dbReference>
<dbReference type="FunFam" id="1.10.8.10:FF:000001">
    <property type="entry name" value="Elongation factor Ts"/>
    <property type="match status" value="1"/>
</dbReference>
<dbReference type="FunFam" id="3.30.479.20:FF:000001">
    <property type="entry name" value="Elongation factor Ts"/>
    <property type="match status" value="1"/>
</dbReference>
<dbReference type="Gene3D" id="1.10.286.20">
    <property type="match status" value="1"/>
</dbReference>
<dbReference type="Gene3D" id="1.10.8.10">
    <property type="entry name" value="DNA helicase RuvA subunit, C-terminal domain"/>
    <property type="match status" value="1"/>
</dbReference>
<dbReference type="Gene3D" id="3.30.479.20">
    <property type="entry name" value="Elongation factor Ts, dimerisation domain"/>
    <property type="match status" value="2"/>
</dbReference>
<dbReference type="HAMAP" id="MF_00050">
    <property type="entry name" value="EF_Ts"/>
    <property type="match status" value="1"/>
</dbReference>
<dbReference type="InterPro" id="IPR036402">
    <property type="entry name" value="EF-Ts_dimer_sf"/>
</dbReference>
<dbReference type="InterPro" id="IPR001816">
    <property type="entry name" value="Transl_elong_EFTs/EF1B"/>
</dbReference>
<dbReference type="InterPro" id="IPR014039">
    <property type="entry name" value="Transl_elong_EFTs/EF1B_dimer"/>
</dbReference>
<dbReference type="InterPro" id="IPR018101">
    <property type="entry name" value="Transl_elong_Ts_CS"/>
</dbReference>
<dbReference type="InterPro" id="IPR009060">
    <property type="entry name" value="UBA-like_sf"/>
</dbReference>
<dbReference type="NCBIfam" id="TIGR00116">
    <property type="entry name" value="tsf"/>
    <property type="match status" value="1"/>
</dbReference>
<dbReference type="PANTHER" id="PTHR11741">
    <property type="entry name" value="ELONGATION FACTOR TS"/>
    <property type="match status" value="1"/>
</dbReference>
<dbReference type="PANTHER" id="PTHR11741:SF0">
    <property type="entry name" value="ELONGATION FACTOR TS, MITOCHONDRIAL"/>
    <property type="match status" value="1"/>
</dbReference>
<dbReference type="Pfam" id="PF00889">
    <property type="entry name" value="EF_TS"/>
    <property type="match status" value="1"/>
</dbReference>
<dbReference type="SUPFAM" id="SSF54713">
    <property type="entry name" value="Elongation factor Ts (EF-Ts), dimerisation domain"/>
    <property type="match status" value="2"/>
</dbReference>
<dbReference type="SUPFAM" id="SSF46934">
    <property type="entry name" value="UBA-like"/>
    <property type="match status" value="1"/>
</dbReference>
<dbReference type="PROSITE" id="PS01126">
    <property type="entry name" value="EF_TS_1"/>
    <property type="match status" value="1"/>
</dbReference>
<dbReference type="PROSITE" id="PS01127">
    <property type="entry name" value="EF_TS_2"/>
    <property type="match status" value="1"/>
</dbReference>
<accession>B0RW66</accession>
<gene>
    <name evidence="1" type="primary">tsf</name>
    <name type="ordered locus">xcc-b100_2923</name>
</gene>
<name>EFTS_XANCB</name>
<organism>
    <name type="scientific">Xanthomonas campestris pv. campestris (strain B100)</name>
    <dbReference type="NCBI Taxonomy" id="509169"/>
    <lineage>
        <taxon>Bacteria</taxon>
        <taxon>Pseudomonadati</taxon>
        <taxon>Pseudomonadota</taxon>
        <taxon>Gammaproteobacteria</taxon>
        <taxon>Lysobacterales</taxon>
        <taxon>Lysobacteraceae</taxon>
        <taxon>Xanthomonas</taxon>
    </lineage>
</organism>
<protein>
    <recommendedName>
        <fullName evidence="1">Elongation factor Ts</fullName>
        <shortName evidence="1">EF-Ts</shortName>
    </recommendedName>
</protein>
<sequence>MEITASLVKELRERTGAGMMECKKALVENAGDIDAAAEWLRKSGLAKADKKADRVAAEGRIATAQAGGKAVLVEVNSETDFVAKDENFLAFTDVVANAALNSDAADADALKSVKLDSGETIEERRAAVIAKVGENLQVRRLVRIDSANNVAAYVHGGRIGVLVELKGGDAELARGIAMHIAAMNPPHVKASDVPAEFVAKEKEIELAKMSEKDKAKPAEILEKIISGKISKIVNEVTLYGQPYVLNTDQTVEQAVKAAGAEVIGFQRLAVGEGIEKVVEDYAAEVMKQAGLA</sequence>
<comment type="function">
    <text evidence="1">Associates with the EF-Tu.GDP complex and induces the exchange of GDP to GTP. It remains bound to the aminoacyl-tRNA.EF-Tu.GTP complex up to the GTP hydrolysis stage on the ribosome.</text>
</comment>
<comment type="subcellular location">
    <subcellularLocation>
        <location evidence="1">Cytoplasm</location>
    </subcellularLocation>
</comment>
<comment type="similarity">
    <text evidence="1">Belongs to the EF-Ts family.</text>
</comment>